<protein>
    <recommendedName>
        <fullName>Myelin proteolipid protein A</fullName>
        <shortName>PLP-A</shortName>
    </recommendedName>
    <alternativeName>
        <fullName>Lipophilin-A</fullName>
    </alternativeName>
</protein>
<accession>P35801</accession>
<accession>Q566G3</accession>
<comment type="function">
    <text>This is the major myelin protein from the central nervous system. It plays an important role in the formation or maintenance of the multilamellar structure of myelin.</text>
</comment>
<comment type="subcellular location">
    <subcellularLocation>
        <location evidence="1">Cell membrane</location>
        <topology evidence="1">Multi-pass membrane protein</topology>
    </subcellularLocation>
</comment>
<comment type="similarity">
    <text evidence="3">Belongs to the myelin proteolipid protein family.</text>
</comment>
<sequence>MGWHDGCIRCMVGVPFASVIATVLCFAGVALFCGCGHEALSGTEKLIETYFSKNYQEYEYLIHVINAFQYVIYGIAIFFFLFGILLLAEGFYTTTAIKHILGEFKPPAIKGGLISTVTGGTPKGRSTRGRQPVHTIELICRCLGKWLGHPDKFVGVTYIITILWILIFACSAVPVYIYFNTWVTCQSIAFPGKTTTSVSTLCSDARMYGVLPWNAFPGKVCGTSLLAICKTSEFQMTFHLFIAAFVGAAATLVALLTYMVGASFNYAVLRVTGRSDRSKF</sequence>
<reference key="1">
    <citation type="submission" date="1992-12" db="EMBL/GenBank/DDBJ databases">
        <title>Molecular cloning of two genes for proteolipid protein from Xenopus laevis.</title>
        <authorList>
            <person name="Kiefer B."/>
            <person name="Schneider A."/>
            <person name="Nave K.-A."/>
        </authorList>
    </citation>
    <scope>NUCLEOTIDE SEQUENCE [MRNA]</scope>
    <source>
        <tissue>Brain</tissue>
    </source>
</reference>
<reference key="2">
    <citation type="submission" date="2005-04" db="EMBL/GenBank/DDBJ databases">
        <authorList>
            <consortium name="NIH - Xenopus Gene Collection (XGC) project"/>
        </authorList>
    </citation>
    <scope>NUCLEOTIDE SEQUENCE [LARGE SCALE MRNA]</scope>
    <source>
        <tissue>Eye</tissue>
    </source>
</reference>
<keyword id="KW-1003">Cell membrane</keyword>
<keyword id="KW-1015">Disulfide bond</keyword>
<keyword id="KW-0449">Lipoprotein</keyword>
<keyword id="KW-0472">Membrane</keyword>
<keyword id="KW-0564">Palmitate</keyword>
<keyword id="KW-1185">Reference proteome</keyword>
<keyword id="KW-0812">Transmembrane</keyword>
<keyword id="KW-1133">Transmembrane helix</keyword>
<organism>
    <name type="scientific">Xenopus laevis</name>
    <name type="common">African clawed frog</name>
    <dbReference type="NCBI Taxonomy" id="8355"/>
    <lineage>
        <taxon>Eukaryota</taxon>
        <taxon>Metazoa</taxon>
        <taxon>Chordata</taxon>
        <taxon>Craniata</taxon>
        <taxon>Vertebrata</taxon>
        <taxon>Euteleostomi</taxon>
        <taxon>Amphibia</taxon>
        <taxon>Batrachia</taxon>
        <taxon>Anura</taxon>
        <taxon>Pipoidea</taxon>
        <taxon>Pipidae</taxon>
        <taxon>Xenopodinae</taxon>
        <taxon>Xenopus</taxon>
        <taxon>Xenopus</taxon>
    </lineage>
</organism>
<name>MYPRA_XENLA</name>
<proteinExistence type="evidence at transcript level"/>
<feature type="chain" id="PRO_0000159012" description="Myelin proteolipid protein A">
    <location>
        <begin position="1"/>
        <end position="280"/>
    </location>
</feature>
<feature type="topological domain" description="Cytoplasmic" evidence="2">
    <location>
        <begin position="1"/>
        <end position="10"/>
    </location>
</feature>
<feature type="transmembrane region" description="Helical; Name=1" evidence="2">
    <location>
        <begin position="11"/>
        <end position="36"/>
    </location>
</feature>
<feature type="topological domain" description="Extracellular" evidence="2">
    <location>
        <begin position="37"/>
        <end position="59"/>
    </location>
</feature>
<feature type="transmembrane region" description="Helical; Name=2" evidence="2">
    <location>
        <begin position="60"/>
        <end position="88"/>
    </location>
</feature>
<feature type="topological domain" description="Cytoplasmic" evidence="2">
    <location>
        <begin position="89"/>
        <end position="152"/>
    </location>
</feature>
<feature type="transmembrane region" description="Helical; Name=3" evidence="2">
    <location>
        <begin position="153"/>
        <end position="179"/>
    </location>
</feature>
<feature type="topological domain" description="Extracellular" evidence="2">
    <location>
        <begin position="180"/>
        <end position="239"/>
    </location>
</feature>
<feature type="transmembrane region" description="Helical; Name=4" evidence="2">
    <location>
        <begin position="240"/>
        <end position="269"/>
    </location>
</feature>
<feature type="topological domain" description="Cytoplasmic" evidence="2">
    <location>
        <begin position="270"/>
        <end position="280"/>
    </location>
</feature>
<feature type="lipid moiety-binding region" description="S-palmitoyl cysteine" evidence="1">
    <location>
        <position position="7"/>
    </location>
</feature>
<feature type="lipid moiety-binding region" description="S-palmitoyl cysteine" evidence="1">
    <location>
        <position position="10"/>
    </location>
</feature>
<feature type="lipid moiety-binding region" description="S-palmitoyl cysteine" evidence="1">
    <location>
        <position position="140"/>
    </location>
</feature>
<feature type="lipid moiety-binding region" description="S-palmitoyl cysteine" evidence="1">
    <location>
        <position position="142"/>
    </location>
</feature>
<feature type="disulfide bond" evidence="1">
    <location>
        <begin position="185"/>
        <end position="229"/>
    </location>
</feature>
<feature type="disulfide bond" evidence="1">
    <location>
        <begin position="202"/>
        <end position="221"/>
    </location>
</feature>
<feature type="sequence conflict" description="In Ref. 1; CAA79582." evidence="3" ref="1">
    <original>A</original>
    <variation>R</variation>
    <location>
        <position position="205"/>
    </location>
</feature>
<dbReference type="EMBL" id="Z19522">
    <property type="protein sequence ID" value="CAA79582.1"/>
    <property type="molecule type" value="mRNA"/>
</dbReference>
<dbReference type="EMBL" id="BC093560">
    <property type="protein sequence ID" value="AAH93560.1"/>
    <property type="molecule type" value="mRNA"/>
</dbReference>
<dbReference type="PIR" id="S31491">
    <property type="entry name" value="S31491"/>
</dbReference>
<dbReference type="RefSeq" id="NP_001082268.1">
    <property type="nucleotide sequence ID" value="NM_001088799.1"/>
</dbReference>
<dbReference type="SMR" id="P35801"/>
<dbReference type="DNASU" id="398334"/>
<dbReference type="GeneID" id="398334"/>
<dbReference type="KEGG" id="xla:398334"/>
<dbReference type="AGR" id="Xenbase:XB-GENE-1008585"/>
<dbReference type="CTD" id="398334"/>
<dbReference type="Xenbase" id="XB-GENE-1008585">
    <property type="gene designation" value="plp1.L"/>
</dbReference>
<dbReference type="OMA" id="AVCKTRE"/>
<dbReference type="OrthoDB" id="9993736at2759"/>
<dbReference type="Proteomes" id="UP000186698">
    <property type="component" value="Chromosome 8L"/>
</dbReference>
<dbReference type="Bgee" id="398334">
    <property type="expression patterns" value="Expressed in brain and 10 other cell types or tissues"/>
</dbReference>
<dbReference type="GO" id="GO:0043209">
    <property type="term" value="C:myelin sheath"/>
    <property type="evidence" value="ECO:0000318"/>
    <property type="project" value="GO_Central"/>
</dbReference>
<dbReference type="GO" id="GO:0005886">
    <property type="term" value="C:plasma membrane"/>
    <property type="evidence" value="ECO:0000250"/>
    <property type="project" value="UniProtKB"/>
</dbReference>
<dbReference type="GO" id="GO:0019911">
    <property type="term" value="F:structural constituent of myelin sheath"/>
    <property type="evidence" value="ECO:0000318"/>
    <property type="project" value="GO_Central"/>
</dbReference>
<dbReference type="GO" id="GO:0061564">
    <property type="term" value="P:axon development"/>
    <property type="evidence" value="ECO:0000318"/>
    <property type="project" value="GO_Central"/>
</dbReference>
<dbReference type="GO" id="GO:0022010">
    <property type="term" value="P:central nervous system myelination"/>
    <property type="evidence" value="ECO:0000318"/>
    <property type="project" value="GO_Central"/>
</dbReference>
<dbReference type="InterPro" id="IPR001614">
    <property type="entry name" value="Myelin_PLP"/>
</dbReference>
<dbReference type="InterPro" id="IPR018237">
    <property type="entry name" value="Myelin_PLP_CS"/>
</dbReference>
<dbReference type="PANTHER" id="PTHR11683">
    <property type="entry name" value="MYELIN PROTEOLIPID"/>
    <property type="match status" value="1"/>
</dbReference>
<dbReference type="PANTHER" id="PTHR11683:SF11">
    <property type="entry name" value="MYELIN PROTEOLIPID PROTEIN"/>
    <property type="match status" value="1"/>
</dbReference>
<dbReference type="Pfam" id="PF01275">
    <property type="entry name" value="Myelin_PLP"/>
    <property type="match status" value="1"/>
</dbReference>
<dbReference type="PRINTS" id="PR00214">
    <property type="entry name" value="MYELINPLP"/>
</dbReference>
<dbReference type="SMART" id="SM00002">
    <property type="entry name" value="PLP"/>
    <property type="match status" value="1"/>
</dbReference>
<dbReference type="PROSITE" id="PS00575">
    <property type="entry name" value="MYELIN_PLP_1"/>
    <property type="match status" value="1"/>
</dbReference>
<dbReference type="PROSITE" id="PS01004">
    <property type="entry name" value="MYELIN_PLP_2"/>
    <property type="match status" value="1"/>
</dbReference>
<evidence type="ECO:0000250" key="1"/>
<evidence type="ECO:0000255" key="2"/>
<evidence type="ECO:0000305" key="3"/>
<gene>
    <name type="primary">plp1-a</name>
    <name type="synonym">plp1</name>
</gene>